<sequence length="182" mass="20018">MHSDAFDLKALIRPVVDFPKPGVIFRDITPLFQSPRGLRYVADQFIERYVEAEFSHIGAMDARGFLIGSIIAHQLNKPLILFRKQGKLPADVLSEGYQTEYGEAFLEVHADSLCEGDSVLIFDDLIATGGTLLAAANLVRRTGAQVFEAAAIIDLPELDGSRRLQAAGVPTFCLTEFSLSEY</sequence>
<protein>
    <recommendedName>
        <fullName evidence="1">Adenine phosphoribosyltransferase</fullName>
        <shortName evidence="1">APRT</shortName>
        <ecNumber evidence="1">2.4.2.7</ecNumber>
    </recommendedName>
</protein>
<feature type="chain" id="PRO_1000073800" description="Adenine phosphoribosyltransferase">
    <location>
        <begin position="1"/>
        <end position="182"/>
    </location>
</feature>
<reference key="1">
    <citation type="submission" date="2008-01" db="EMBL/GenBank/DDBJ databases">
        <title>Complete sequence of Pseudomonas putida GB-1.</title>
        <authorList>
            <consortium name="US DOE Joint Genome Institute"/>
            <person name="Copeland A."/>
            <person name="Lucas S."/>
            <person name="Lapidus A."/>
            <person name="Barry K."/>
            <person name="Glavina del Rio T."/>
            <person name="Dalin E."/>
            <person name="Tice H."/>
            <person name="Pitluck S."/>
            <person name="Bruce D."/>
            <person name="Goodwin L."/>
            <person name="Chertkov O."/>
            <person name="Brettin T."/>
            <person name="Detter J.C."/>
            <person name="Han C."/>
            <person name="Kuske C.R."/>
            <person name="Schmutz J."/>
            <person name="Larimer F."/>
            <person name="Land M."/>
            <person name="Hauser L."/>
            <person name="Kyrpides N."/>
            <person name="Kim E."/>
            <person name="McCarthy J.K."/>
            <person name="Richardson P."/>
        </authorList>
    </citation>
    <scope>NUCLEOTIDE SEQUENCE [LARGE SCALE GENOMIC DNA]</scope>
    <source>
        <strain>GB-1</strain>
    </source>
</reference>
<evidence type="ECO:0000255" key="1">
    <source>
        <dbReference type="HAMAP-Rule" id="MF_00004"/>
    </source>
</evidence>
<gene>
    <name evidence="1" type="primary">apt</name>
    <name type="ordered locus">PputGB1_3831</name>
</gene>
<keyword id="KW-0963">Cytoplasm</keyword>
<keyword id="KW-0328">Glycosyltransferase</keyword>
<keyword id="KW-0660">Purine salvage</keyword>
<keyword id="KW-0808">Transferase</keyword>
<accession>B0KPW6</accession>
<comment type="function">
    <text evidence="1">Catalyzes a salvage reaction resulting in the formation of AMP, that is energically less costly than de novo synthesis.</text>
</comment>
<comment type="catalytic activity">
    <reaction evidence="1">
        <text>AMP + diphosphate = 5-phospho-alpha-D-ribose 1-diphosphate + adenine</text>
        <dbReference type="Rhea" id="RHEA:16609"/>
        <dbReference type="ChEBI" id="CHEBI:16708"/>
        <dbReference type="ChEBI" id="CHEBI:33019"/>
        <dbReference type="ChEBI" id="CHEBI:58017"/>
        <dbReference type="ChEBI" id="CHEBI:456215"/>
        <dbReference type="EC" id="2.4.2.7"/>
    </reaction>
</comment>
<comment type="pathway">
    <text evidence="1">Purine metabolism; AMP biosynthesis via salvage pathway; AMP from adenine: step 1/1.</text>
</comment>
<comment type="subunit">
    <text evidence="1">Homodimer.</text>
</comment>
<comment type="subcellular location">
    <subcellularLocation>
        <location evidence="1">Cytoplasm</location>
    </subcellularLocation>
</comment>
<comment type="similarity">
    <text evidence="1">Belongs to the purine/pyrimidine phosphoribosyltransferase family.</text>
</comment>
<organism>
    <name type="scientific">Pseudomonas putida (strain GB-1)</name>
    <dbReference type="NCBI Taxonomy" id="76869"/>
    <lineage>
        <taxon>Bacteria</taxon>
        <taxon>Pseudomonadati</taxon>
        <taxon>Pseudomonadota</taxon>
        <taxon>Gammaproteobacteria</taxon>
        <taxon>Pseudomonadales</taxon>
        <taxon>Pseudomonadaceae</taxon>
        <taxon>Pseudomonas</taxon>
    </lineage>
</organism>
<name>APT_PSEPG</name>
<proteinExistence type="inferred from homology"/>
<dbReference type="EC" id="2.4.2.7" evidence="1"/>
<dbReference type="EMBL" id="CP000926">
    <property type="protein sequence ID" value="ABY99721.1"/>
    <property type="molecule type" value="Genomic_DNA"/>
</dbReference>
<dbReference type="RefSeq" id="WP_009683910.1">
    <property type="nucleotide sequence ID" value="NC_010322.1"/>
</dbReference>
<dbReference type="SMR" id="B0KPW6"/>
<dbReference type="KEGG" id="ppg:PputGB1_3831"/>
<dbReference type="eggNOG" id="COG0503">
    <property type="taxonomic scope" value="Bacteria"/>
</dbReference>
<dbReference type="HOGENOM" id="CLU_063339_3_0_6"/>
<dbReference type="UniPathway" id="UPA00588">
    <property type="reaction ID" value="UER00646"/>
</dbReference>
<dbReference type="Proteomes" id="UP000002157">
    <property type="component" value="Chromosome"/>
</dbReference>
<dbReference type="GO" id="GO:0005829">
    <property type="term" value="C:cytosol"/>
    <property type="evidence" value="ECO:0007669"/>
    <property type="project" value="TreeGrafter"/>
</dbReference>
<dbReference type="GO" id="GO:0003999">
    <property type="term" value="F:adenine phosphoribosyltransferase activity"/>
    <property type="evidence" value="ECO:0007669"/>
    <property type="project" value="UniProtKB-UniRule"/>
</dbReference>
<dbReference type="GO" id="GO:0006168">
    <property type="term" value="P:adenine salvage"/>
    <property type="evidence" value="ECO:0007669"/>
    <property type="project" value="InterPro"/>
</dbReference>
<dbReference type="GO" id="GO:0044209">
    <property type="term" value="P:AMP salvage"/>
    <property type="evidence" value="ECO:0007669"/>
    <property type="project" value="UniProtKB-UniRule"/>
</dbReference>
<dbReference type="GO" id="GO:0006166">
    <property type="term" value="P:purine ribonucleoside salvage"/>
    <property type="evidence" value="ECO:0007669"/>
    <property type="project" value="UniProtKB-KW"/>
</dbReference>
<dbReference type="CDD" id="cd06223">
    <property type="entry name" value="PRTases_typeI"/>
    <property type="match status" value="1"/>
</dbReference>
<dbReference type="FunFam" id="3.40.50.2020:FF:000021">
    <property type="entry name" value="Adenine phosphoribosyltransferase"/>
    <property type="match status" value="1"/>
</dbReference>
<dbReference type="Gene3D" id="3.40.50.2020">
    <property type="match status" value="1"/>
</dbReference>
<dbReference type="HAMAP" id="MF_00004">
    <property type="entry name" value="Aden_phosphoribosyltr"/>
    <property type="match status" value="1"/>
</dbReference>
<dbReference type="InterPro" id="IPR005764">
    <property type="entry name" value="Ade_phspho_trans"/>
</dbReference>
<dbReference type="InterPro" id="IPR050120">
    <property type="entry name" value="Adenine_PRTase"/>
</dbReference>
<dbReference type="InterPro" id="IPR000836">
    <property type="entry name" value="PRibTrfase_dom"/>
</dbReference>
<dbReference type="InterPro" id="IPR029057">
    <property type="entry name" value="PRTase-like"/>
</dbReference>
<dbReference type="NCBIfam" id="TIGR01090">
    <property type="entry name" value="apt"/>
    <property type="match status" value="1"/>
</dbReference>
<dbReference type="NCBIfam" id="NF002634">
    <property type="entry name" value="PRK02304.1-3"/>
    <property type="match status" value="1"/>
</dbReference>
<dbReference type="NCBIfam" id="NF002636">
    <property type="entry name" value="PRK02304.1-5"/>
    <property type="match status" value="1"/>
</dbReference>
<dbReference type="PANTHER" id="PTHR11776">
    <property type="entry name" value="ADENINE PHOSPHORIBOSYLTRANSFERASE"/>
    <property type="match status" value="1"/>
</dbReference>
<dbReference type="PANTHER" id="PTHR11776:SF7">
    <property type="entry name" value="PHOSPHORIBOSYLTRANSFERASE DOMAIN-CONTAINING PROTEIN"/>
    <property type="match status" value="1"/>
</dbReference>
<dbReference type="Pfam" id="PF00156">
    <property type="entry name" value="Pribosyltran"/>
    <property type="match status" value="1"/>
</dbReference>
<dbReference type="SUPFAM" id="SSF53271">
    <property type="entry name" value="PRTase-like"/>
    <property type="match status" value="1"/>
</dbReference>
<dbReference type="PROSITE" id="PS00103">
    <property type="entry name" value="PUR_PYR_PR_TRANSFER"/>
    <property type="match status" value="1"/>
</dbReference>